<proteinExistence type="inferred from homology"/>
<dbReference type="EMBL" id="CP000247">
    <property type="protein sequence ID" value="ABG69013.1"/>
    <property type="molecule type" value="Genomic_DNA"/>
</dbReference>
<dbReference type="RefSeq" id="WP_000420625.1">
    <property type="nucleotide sequence ID" value="NC_008253.1"/>
</dbReference>
<dbReference type="SMR" id="Q0TJ66"/>
<dbReference type="KEGG" id="ecp:ECP_1000"/>
<dbReference type="HOGENOM" id="CLU_017633_0_0_6"/>
<dbReference type="Proteomes" id="UP000009182">
    <property type="component" value="Chromosome"/>
</dbReference>
<dbReference type="GO" id="GO:0005737">
    <property type="term" value="C:cytoplasm"/>
    <property type="evidence" value="ECO:0007669"/>
    <property type="project" value="UniProtKB-UniRule"/>
</dbReference>
<dbReference type="GO" id="GO:0009295">
    <property type="term" value="C:nucleoid"/>
    <property type="evidence" value="ECO:0007669"/>
    <property type="project" value="UniProtKB-SubCell"/>
</dbReference>
<dbReference type="GO" id="GO:0003681">
    <property type="term" value="F:bent DNA binding"/>
    <property type="evidence" value="ECO:0007669"/>
    <property type="project" value="UniProtKB-UniRule"/>
</dbReference>
<dbReference type="GO" id="GO:0051082">
    <property type="term" value="F:unfolded protein binding"/>
    <property type="evidence" value="ECO:0007669"/>
    <property type="project" value="InterPro"/>
</dbReference>
<dbReference type="GO" id="GO:0051085">
    <property type="term" value="P:chaperone cofactor-dependent protein refolding"/>
    <property type="evidence" value="ECO:0007669"/>
    <property type="project" value="TreeGrafter"/>
</dbReference>
<dbReference type="GO" id="GO:0042026">
    <property type="term" value="P:protein refolding"/>
    <property type="evidence" value="ECO:0007669"/>
    <property type="project" value="TreeGrafter"/>
</dbReference>
<dbReference type="CDD" id="cd06257">
    <property type="entry name" value="DnaJ"/>
    <property type="match status" value="1"/>
</dbReference>
<dbReference type="CDD" id="cd10747">
    <property type="entry name" value="DnaJ_C"/>
    <property type="match status" value="1"/>
</dbReference>
<dbReference type="FunFam" id="1.10.287.110:FF:000013">
    <property type="entry name" value="Curved DNA-binding protein"/>
    <property type="match status" value="1"/>
</dbReference>
<dbReference type="FunFam" id="2.60.260.20:FF:000008">
    <property type="entry name" value="Curved DNA-binding protein"/>
    <property type="match status" value="1"/>
</dbReference>
<dbReference type="FunFam" id="2.60.260.20:FF:000013">
    <property type="entry name" value="DnaJ subfamily B member 11"/>
    <property type="match status" value="1"/>
</dbReference>
<dbReference type="Gene3D" id="1.10.287.110">
    <property type="entry name" value="DnaJ domain"/>
    <property type="match status" value="1"/>
</dbReference>
<dbReference type="Gene3D" id="1.20.5.460">
    <property type="entry name" value="Single helix bin"/>
    <property type="match status" value="1"/>
</dbReference>
<dbReference type="Gene3D" id="2.60.260.20">
    <property type="entry name" value="Urease metallochaperone UreE, N-terminal domain"/>
    <property type="match status" value="2"/>
</dbReference>
<dbReference type="HAMAP" id="MF_01154">
    <property type="entry name" value="CbpA"/>
    <property type="match status" value="1"/>
</dbReference>
<dbReference type="InterPro" id="IPR023859">
    <property type="entry name" value="DNA-bd_curved-DNA"/>
</dbReference>
<dbReference type="InterPro" id="IPR002939">
    <property type="entry name" value="DnaJ_C"/>
</dbReference>
<dbReference type="InterPro" id="IPR001623">
    <property type="entry name" value="DnaJ_domain"/>
</dbReference>
<dbReference type="InterPro" id="IPR018253">
    <property type="entry name" value="DnaJ_domain_CS"/>
</dbReference>
<dbReference type="InterPro" id="IPR008971">
    <property type="entry name" value="HSP40/DnaJ_pept-bd"/>
</dbReference>
<dbReference type="InterPro" id="IPR036869">
    <property type="entry name" value="J_dom_sf"/>
</dbReference>
<dbReference type="NCBIfam" id="NF007618">
    <property type="entry name" value="PRK10266.1"/>
    <property type="match status" value="1"/>
</dbReference>
<dbReference type="PANTHER" id="PTHR43096">
    <property type="entry name" value="DNAJ HOMOLOG 1, MITOCHONDRIAL-RELATED"/>
    <property type="match status" value="1"/>
</dbReference>
<dbReference type="PANTHER" id="PTHR43096:SF52">
    <property type="entry name" value="DNAJ HOMOLOG 1, MITOCHONDRIAL-RELATED"/>
    <property type="match status" value="1"/>
</dbReference>
<dbReference type="Pfam" id="PF00226">
    <property type="entry name" value="DnaJ"/>
    <property type="match status" value="1"/>
</dbReference>
<dbReference type="Pfam" id="PF01556">
    <property type="entry name" value="DnaJ_C"/>
    <property type="match status" value="1"/>
</dbReference>
<dbReference type="PRINTS" id="PR00625">
    <property type="entry name" value="JDOMAIN"/>
</dbReference>
<dbReference type="SMART" id="SM00271">
    <property type="entry name" value="DnaJ"/>
    <property type="match status" value="1"/>
</dbReference>
<dbReference type="SUPFAM" id="SSF46565">
    <property type="entry name" value="Chaperone J-domain"/>
    <property type="match status" value="1"/>
</dbReference>
<dbReference type="SUPFAM" id="SSF49493">
    <property type="entry name" value="HSP40/DnaJ peptide-binding domain"/>
    <property type="match status" value="2"/>
</dbReference>
<dbReference type="PROSITE" id="PS00636">
    <property type="entry name" value="DNAJ_1"/>
    <property type="match status" value="1"/>
</dbReference>
<dbReference type="PROSITE" id="PS50076">
    <property type="entry name" value="DNAJ_2"/>
    <property type="match status" value="1"/>
</dbReference>
<gene>
    <name evidence="1" type="primary">cbpA</name>
    <name type="ordered locus">ECP_1000</name>
</gene>
<keyword id="KW-0143">Chaperone</keyword>
<keyword id="KW-0963">Cytoplasm</keyword>
<keyword id="KW-0238">DNA-binding</keyword>
<sequence>MELKDYYAIMGVKPTDDLKTIKTAYRRLARKYHPDVSKEPDAEARFKEVAEAWEVLSDEQRRAEYDQMWQHRNDPQFNRQFHHGDGQSFNAEDFDDIFSSIFGQHARQSRQRPATRGHDIEIEVAVFLEETLTEHKRTISYNLPVYNAFGMIEQEIPKTLNVKIPAGVGNGQRIRLKGQGTPGENGGPNGDLWLVIHIAPHPLFDIVGQDLEIVVPVSPWEAALGTKVTVPTLKESILLTIPPGSQAGQRLRVKGKGLVSKKQTGDLYAVLKIVMPPKPDENTAALWQQLADAQSSFDPRKDWGKA</sequence>
<protein>
    <recommendedName>
        <fullName evidence="1">Curved DNA-binding protein</fullName>
    </recommendedName>
</protein>
<reference key="1">
    <citation type="journal article" date="2006" name="Mol. Microbiol.">
        <title>Role of pathogenicity island-associated integrases in the genome plasticity of uropathogenic Escherichia coli strain 536.</title>
        <authorList>
            <person name="Hochhut B."/>
            <person name="Wilde C."/>
            <person name="Balling G."/>
            <person name="Middendorf B."/>
            <person name="Dobrindt U."/>
            <person name="Brzuszkiewicz E."/>
            <person name="Gottschalk G."/>
            <person name="Carniel E."/>
            <person name="Hacker J."/>
        </authorList>
    </citation>
    <scope>NUCLEOTIDE SEQUENCE [LARGE SCALE GENOMIC DNA]</scope>
    <source>
        <strain>536 / UPEC</strain>
    </source>
</reference>
<name>CBPA_ECOL5</name>
<organism>
    <name type="scientific">Escherichia coli O6:K15:H31 (strain 536 / UPEC)</name>
    <dbReference type="NCBI Taxonomy" id="362663"/>
    <lineage>
        <taxon>Bacteria</taxon>
        <taxon>Pseudomonadati</taxon>
        <taxon>Pseudomonadota</taxon>
        <taxon>Gammaproteobacteria</taxon>
        <taxon>Enterobacterales</taxon>
        <taxon>Enterobacteriaceae</taxon>
        <taxon>Escherichia</taxon>
    </lineage>
</organism>
<evidence type="ECO:0000255" key="1">
    <source>
        <dbReference type="HAMAP-Rule" id="MF_01154"/>
    </source>
</evidence>
<accession>Q0TJ66</accession>
<comment type="function">
    <text evidence="1">DNA-binding protein that preferentially recognizes a curved DNA sequence. It is probably a functional analog of DnaJ; displays overlapping activities with DnaJ, but functions under different conditions, probably acting as a molecular chaperone in an adaptive response to environmental stresses other than heat shock. Lacks autonomous chaperone activity; binds native substrates and targets them for recognition by DnaK. Its activity is inhibited by the binding of CbpM.</text>
</comment>
<comment type="subcellular location">
    <subcellularLocation>
        <location evidence="1">Cytoplasm</location>
        <location evidence="1">Nucleoid</location>
    </subcellularLocation>
</comment>
<feature type="chain" id="PRO_0000286881" description="Curved DNA-binding protein">
    <location>
        <begin position="1"/>
        <end position="306"/>
    </location>
</feature>
<feature type="domain" description="J" evidence="1">
    <location>
        <begin position="5"/>
        <end position="69"/>
    </location>
</feature>